<reference key="1">
    <citation type="journal article" date="2004" name="Nat. Genet.">
        <title>Complete sequencing and characterization of 21,243 full-length human cDNAs.</title>
        <authorList>
            <person name="Ota T."/>
            <person name="Suzuki Y."/>
            <person name="Nishikawa T."/>
            <person name="Otsuki T."/>
            <person name="Sugiyama T."/>
            <person name="Irie R."/>
            <person name="Wakamatsu A."/>
            <person name="Hayashi K."/>
            <person name="Sato H."/>
            <person name="Nagai K."/>
            <person name="Kimura K."/>
            <person name="Makita H."/>
            <person name="Sekine M."/>
            <person name="Obayashi M."/>
            <person name="Nishi T."/>
            <person name="Shibahara T."/>
            <person name="Tanaka T."/>
            <person name="Ishii S."/>
            <person name="Yamamoto J."/>
            <person name="Saito K."/>
            <person name="Kawai Y."/>
            <person name="Isono Y."/>
            <person name="Nakamura Y."/>
            <person name="Nagahari K."/>
            <person name="Murakami K."/>
            <person name="Yasuda T."/>
            <person name="Iwayanagi T."/>
            <person name="Wagatsuma M."/>
            <person name="Shiratori A."/>
            <person name="Sudo H."/>
            <person name="Hosoiri T."/>
            <person name="Kaku Y."/>
            <person name="Kodaira H."/>
            <person name="Kondo H."/>
            <person name="Sugawara M."/>
            <person name="Takahashi M."/>
            <person name="Kanda K."/>
            <person name="Yokoi T."/>
            <person name="Furuya T."/>
            <person name="Kikkawa E."/>
            <person name="Omura Y."/>
            <person name="Abe K."/>
            <person name="Kamihara K."/>
            <person name="Katsuta N."/>
            <person name="Sato K."/>
            <person name="Tanikawa M."/>
            <person name="Yamazaki M."/>
            <person name="Ninomiya K."/>
            <person name="Ishibashi T."/>
            <person name="Yamashita H."/>
            <person name="Murakawa K."/>
            <person name="Fujimori K."/>
            <person name="Tanai H."/>
            <person name="Kimata M."/>
            <person name="Watanabe M."/>
            <person name="Hiraoka S."/>
            <person name="Chiba Y."/>
            <person name="Ishida S."/>
            <person name="Ono Y."/>
            <person name="Takiguchi S."/>
            <person name="Watanabe S."/>
            <person name="Yosida M."/>
            <person name="Hotuta T."/>
            <person name="Kusano J."/>
            <person name="Kanehori K."/>
            <person name="Takahashi-Fujii A."/>
            <person name="Hara H."/>
            <person name="Tanase T.-O."/>
            <person name="Nomura Y."/>
            <person name="Togiya S."/>
            <person name="Komai F."/>
            <person name="Hara R."/>
            <person name="Takeuchi K."/>
            <person name="Arita M."/>
            <person name="Imose N."/>
            <person name="Musashino K."/>
            <person name="Yuuki H."/>
            <person name="Oshima A."/>
            <person name="Sasaki N."/>
            <person name="Aotsuka S."/>
            <person name="Yoshikawa Y."/>
            <person name="Matsunawa H."/>
            <person name="Ichihara T."/>
            <person name="Shiohata N."/>
            <person name="Sano S."/>
            <person name="Moriya S."/>
            <person name="Momiyama H."/>
            <person name="Satoh N."/>
            <person name="Takami S."/>
            <person name="Terashima Y."/>
            <person name="Suzuki O."/>
            <person name="Nakagawa S."/>
            <person name="Senoh A."/>
            <person name="Mizoguchi H."/>
            <person name="Goto Y."/>
            <person name="Shimizu F."/>
            <person name="Wakebe H."/>
            <person name="Hishigaki H."/>
            <person name="Watanabe T."/>
            <person name="Sugiyama A."/>
            <person name="Takemoto M."/>
            <person name="Kawakami B."/>
            <person name="Yamazaki M."/>
            <person name="Watanabe K."/>
            <person name="Kumagai A."/>
            <person name="Itakura S."/>
            <person name="Fukuzumi Y."/>
            <person name="Fujimori Y."/>
            <person name="Komiyama M."/>
            <person name="Tashiro H."/>
            <person name="Tanigami A."/>
            <person name="Fujiwara T."/>
            <person name="Ono T."/>
            <person name="Yamada K."/>
            <person name="Fujii Y."/>
            <person name="Ozaki K."/>
            <person name="Hirao M."/>
            <person name="Ohmori Y."/>
            <person name="Kawabata A."/>
            <person name="Hikiji T."/>
            <person name="Kobatake N."/>
            <person name="Inagaki H."/>
            <person name="Ikema Y."/>
            <person name="Okamoto S."/>
            <person name="Okitani R."/>
            <person name="Kawakami T."/>
            <person name="Noguchi S."/>
            <person name="Itoh T."/>
            <person name="Shigeta K."/>
            <person name="Senba T."/>
            <person name="Matsumura K."/>
            <person name="Nakajima Y."/>
            <person name="Mizuno T."/>
            <person name="Morinaga M."/>
            <person name="Sasaki M."/>
            <person name="Togashi T."/>
            <person name="Oyama M."/>
            <person name="Hata H."/>
            <person name="Watanabe M."/>
            <person name="Komatsu T."/>
            <person name="Mizushima-Sugano J."/>
            <person name="Satoh T."/>
            <person name="Shirai Y."/>
            <person name="Takahashi Y."/>
            <person name="Nakagawa K."/>
            <person name="Okumura K."/>
            <person name="Nagase T."/>
            <person name="Nomura N."/>
            <person name="Kikuchi H."/>
            <person name="Masuho Y."/>
            <person name="Yamashita R."/>
            <person name="Nakai K."/>
            <person name="Yada T."/>
            <person name="Nakamura Y."/>
            <person name="Ohara O."/>
            <person name="Isogai T."/>
            <person name="Sugano S."/>
        </authorList>
    </citation>
    <scope>NUCLEOTIDE SEQUENCE [LARGE SCALE MRNA] (ISOFORM 4)</scope>
    <source>
        <tissue>Brain</tissue>
    </source>
</reference>
<reference key="2">
    <citation type="journal article" date="2005" name="Nature">
        <title>The DNA sequence of the human X chromosome.</title>
        <authorList>
            <person name="Ross M.T."/>
            <person name="Grafham D.V."/>
            <person name="Coffey A.J."/>
            <person name="Scherer S."/>
            <person name="McLay K."/>
            <person name="Muzny D."/>
            <person name="Platzer M."/>
            <person name="Howell G.R."/>
            <person name="Burrows C."/>
            <person name="Bird C.P."/>
            <person name="Frankish A."/>
            <person name="Lovell F.L."/>
            <person name="Howe K.L."/>
            <person name="Ashurst J.L."/>
            <person name="Fulton R.S."/>
            <person name="Sudbrak R."/>
            <person name="Wen G."/>
            <person name="Jones M.C."/>
            <person name="Hurles M.E."/>
            <person name="Andrews T.D."/>
            <person name="Scott C.E."/>
            <person name="Searle S."/>
            <person name="Ramser J."/>
            <person name="Whittaker A."/>
            <person name="Deadman R."/>
            <person name="Carter N.P."/>
            <person name="Hunt S.E."/>
            <person name="Chen R."/>
            <person name="Cree A."/>
            <person name="Gunaratne P."/>
            <person name="Havlak P."/>
            <person name="Hodgson A."/>
            <person name="Metzker M.L."/>
            <person name="Richards S."/>
            <person name="Scott G."/>
            <person name="Steffen D."/>
            <person name="Sodergren E."/>
            <person name="Wheeler D.A."/>
            <person name="Worley K.C."/>
            <person name="Ainscough R."/>
            <person name="Ambrose K.D."/>
            <person name="Ansari-Lari M.A."/>
            <person name="Aradhya S."/>
            <person name="Ashwell R.I."/>
            <person name="Babbage A.K."/>
            <person name="Bagguley C.L."/>
            <person name="Ballabio A."/>
            <person name="Banerjee R."/>
            <person name="Barker G.E."/>
            <person name="Barlow K.F."/>
            <person name="Barrett I.P."/>
            <person name="Bates K.N."/>
            <person name="Beare D.M."/>
            <person name="Beasley H."/>
            <person name="Beasley O."/>
            <person name="Beck A."/>
            <person name="Bethel G."/>
            <person name="Blechschmidt K."/>
            <person name="Brady N."/>
            <person name="Bray-Allen S."/>
            <person name="Bridgeman A.M."/>
            <person name="Brown A.J."/>
            <person name="Brown M.J."/>
            <person name="Bonnin D."/>
            <person name="Bruford E.A."/>
            <person name="Buhay C."/>
            <person name="Burch P."/>
            <person name="Burford D."/>
            <person name="Burgess J."/>
            <person name="Burrill W."/>
            <person name="Burton J."/>
            <person name="Bye J.M."/>
            <person name="Carder C."/>
            <person name="Carrel L."/>
            <person name="Chako J."/>
            <person name="Chapman J.C."/>
            <person name="Chavez D."/>
            <person name="Chen E."/>
            <person name="Chen G."/>
            <person name="Chen Y."/>
            <person name="Chen Z."/>
            <person name="Chinault C."/>
            <person name="Ciccodicola A."/>
            <person name="Clark S.Y."/>
            <person name="Clarke G."/>
            <person name="Clee C.M."/>
            <person name="Clegg S."/>
            <person name="Clerc-Blankenburg K."/>
            <person name="Clifford K."/>
            <person name="Cobley V."/>
            <person name="Cole C.G."/>
            <person name="Conquer J.S."/>
            <person name="Corby N."/>
            <person name="Connor R.E."/>
            <person name="David R."/>
            <person name="Davies J."/>
            <person name="Davis C."/>
            <person name="Davis J."/>
            <person name="Delgado O."/>
            <person name="Deshazo D."/>
            <person name="Dhami P."/>
            <person name="Ding Y."/>
            <person name="Dinh H."/>
            <person name="Dodsworth S."/>
            <person name="Draper H."/>
            <person name="Dugan-Rocha S."/>
            <person name="Dunham A."/>
            <person name="Dunn M."/>
            <person name="Durbin K.J."/>
            <person name="Dutta I."/>
            <person name="Eades T."/>
            <person name="Ellwood M."/>
            <person name="Emery-Cohen A."/>
            <person name="Errington H."/>
            <person name="Evans K.L."/>
            <person name="Faulkner L."/>
            <person name="Francis F."/>
            <person name="Frankland J."/>
            <person name="Fraser A.E."/>
            <person name="Galgoczy P."/>
            <person name="Gilbert J."/>
            <person name="Gill R."/>
            <person name="Gloeckner G."/>
            <person name="Gregory S.G."/>
            <person name="Gribble S."/>
            <person name="Griffiths C."/>
            <person name="Grocock R."/>
            <person name="Gu Y."/>
            <person name="Gwilliam R."/>
            <person name="Hamilton C."/>
            <person name="Hart E.A."/>
            <person name="Hawes A."/>
            <person name="Heath P.D."/>
            <person name="Heitmann K."/>
            <person name="Hennig S."/>
            <person name="Hernandez J."/>
            <person name="Hinzmann B."/>
            <person name="Ho S."/>
            <person name="Hoffs M."/>
            <person name="Howden P.J."/>
            <person name="Huckle E.J."/>
            <person name="Hume J."/>
            <person name="Hunt P.J."/>
            <person name="Hunt A.R."/>
            <person name="Isherwood J."/>
            <person name="Jacob L."/>
            <person name="Johnson D."/>
            <person name="Jones S."/>
            <person name="de Jong P.J."/>
            <person name="Joseph S.S."/>
            <person name="Keenan S."/>
            <person name="Kelly S."/>
            <person name="Kershaw J.K."/>
            <person name="Khan Z."/>
            <person name="Kioschis P."/>
            <person name="Klages S."/>
            <person name="Knights A.J."/>
            <person name="Kosiura A."/>
            <person name="Kovar-Smith C."/>
            <person name="Laird G.K."/>
            <person name="Langford C."/>
            <person name="Lawlor S."/>
            <person name="Leversha M."/>
            <person name="Lewis L."/>
            <person name="Liu W."/>
            <person name="Lloyd C."/>
            <person name="Lloyd D.M."/>
            <person name="Loulseged H."/>
            <person name="Loveland J.E."/>
            <person name="Lovell J.D."/>
            <person name="Lozado R."/>
            <person name="Lu J."/>
            <person name="Lyne R."/>
            <person name="Ma J."/>
            <person name="Maheshwari M."/>
            <person name="Matthews L.H."/>
            <person name="McDowall J."/>
            <person name="McLaren S."/>
            <person name="McMurray A."/>
            <person name="Meidl P."/>
            <person name="Meitinger T."/>
            <person name="Milne S."/>
            <person name="Miner G."/>
            <person name="Mistry S.L."/>
            <person name="Morgan M."/>
            <person name="Morris S."/>
            <person name="Mueller I."/>
            <person name="Mullikin J.C."/>
            <person name="Nguyen N."/>
            <person name="Nordsiek G."/>
            <person name="Nyakatura G."/>
            <person name="O'dell C.N."/>
            <person name="Okwuonu G."/>
            <person name="Palmer S."/>
            <person name="Pandian R."/>
            <person name="Parker D."/>
            <person name="Parrish J."/>
            <person name="Pasternak S."/>
            <person name="Patel D."/>
            <person name="Pearce A.V."/>
            <person name="Pearson D.M."/>
            <person name="Pelan S.E."/>
            <person name="Perez L."/>
            <person name="Porter K.M."/>
            <person name="Ramsey Y."/>
            <person name="Reichwald K."/>
            <person name="Rhodes S."/>
            <person name="Ridler K.A."/>
            <person name="Schlessinger D."/>
            <person name="Schueler M.G."/>
            <person name="Sehra H.K."/>
            <person name="Shaw-Smith C."/>
            <person name="Shen H."/>
            <person name="Sheridan E.M."/>
            <person name="Shownkeen R."/>
            <person name="Skuce C.D."/>
            <person name="Smith M.L."/>
            <person name="Sotheran E.C."/>
            <person name="Steingruber H.E."/>
            <person name="Steward C.A."/>
            <person name="Storey R."/>
            <person name="Swann R.M."/>
            <person name="Swarbreck D."/>
            <person name="Tabor P.E."/>
            <person name="Taudien S."/>
            <person name="Taylor T."/>
            <person name="Teague B."/>
            <person name="Thomas K."/>
            <person name="Thorpe A."/>
            <person name="Timms K."/>
            <person name="Tracey A."/>
            <person name="Trevanion S."/>
            <person name="Tromans A.C."/>
            <person name="d'Urso M."/>
            <person name="Verduzco D."/>
            <person name="Villasana D."/>
            <person name="Waldron L."/>
            <person name="Wall M."/>
            <person name="Wang Q."/>
            <person name="Warren J."/>
            <person name="Warry G.L."/>
            <person name="Wei X."/>
            <person name="West A."/>
            <person name="Whitehead S.L."/>
            <person name="Whiteley M.N."/>
            <person name="Wilkinson J.E."/>
            <person name="Willey D.L."/>
            <person name="Williams G."/>
            <person name="Williams L."/>
            <person name="Williamson A."/>
            <person name="Williamson H."/>
            <person name="Wilming L."/>
            <person name="Woodmansey R.L."/>
            <person name="Wray P.W."/>
            <person name="Yen J."/>
            <person name="Zhang J."/>
            <person name="Zhou J."/>
            <person name="Zoghbi H."/>
            <person name="Zorilla S."/>
            <person name="Buck D."/>
            <person name="Reinhardt R."/>
            <person name="Poustka A."/>
            <person name="Rosenthal A."/>
            <person name="Lehrach H."/>
            <person name="Meindl A."/>
            <person name="Minx P.J."/>
            <person name="Hillier L.W."/>
            <person name="Willard H.F."/>
            <person name="Wilson R.K."/>
            <person name="Waterston R.H."/>
            <person name="Rice C.M."/>
            <person name="Vaudin M."/>
            <person name="Coulson A."/>
            <person name="Nelson D.L."/>
            <person name="Weinstock G."/>
            <person name="Sulston J.E."/>
            <person name="Durbin R.M."/>
            <person name="Hubbard T."/>
            <person name="Gibbs R.A."/>
            <person name="Beck S."/>
            <person name="Rogers J."/>
            <person name="Bentley D.R."/>
        </authorList>
    </citation>
    <scope>NUCLEOTIDE SEQUENCE [LARGE SCALE GENOMIC DNA]</scope>
</reference>
<reference key="3">
    <citation type="submission" date="2005-07" db="EMBL/GenBank/DDBJ databases">
        <authorList>
            <person name="Mural R.J."/>
            <person name="Istrail S."/>
            <person name="Sutton G.G."/>
            <person name="Florea L."/>
            <person name="Halpern A.L."/>
            <person name="Mobarry C.M."/>
            <person name="Lippert R."/>
            <person name="Walenz B."/>
            <person name="Shatkay H."/>
            <person name="Dew I."/>
            <person name="Miller J.R."/>
            <person name="Flanigan M.J."/>
            <person name="Edwards N.J."/>
            <person name="Bolanos R."/>
            <person name="Fasulo D."/>
            <person name="Halldorsson B.V."/>
            <person name="Hannenhalli S."/>
            <person name="Turner R."/>
            <person name="Yooseph S."/>
            <person name="Lu F."/>
            <person name="Nusskern D.R."/>
            <person name="Shue B.C."/>
            <person name="Zheng X.H."/>
            <person name="Zhong F."/>
            <person name="Delcher A.L."/>
            <person name="Huson D.H."/>
            <person name="Kravitz S.A."/>
            <person name="Mouchard L."/>
            <person name="Reinert K."/>
            <person name="Remington K.A."/>
            <person name="Clark A.G."/>
            <person name="Waterman M.S."/>
            <person name="Eichler E.E."/>
            <person name="Adams M.D."/>
            <person name="Hunkapiller M.W."/>
            <person name="Myers E.W."/>
            <person name="Venter J.C."/>
        </authorList>
    </citation>
    <scope>NUCLEOTIDE SEQUENCE [LARGE SCALE GENOMIC DNA]</scope>
</reference>
<reference key="4">
    <citation type="journal article" date="2004" name="Genome Res.">
        <title>The status, quality, and expansion of the NIH full-length cDNA project: the Mammalian Gene Collection (MGC).</title>
        <authorList>
            <consortium name="The MGC Project Team"/>
        </authorList>
    </citation>
    <scope>NUCLEOTIDE SEQUENCE [LARGE SCALE MRNA] (ISOFORMS 1 AND 2)</scope>
    <scope>NUCLEOTIDE SEQUENCE [LARGE SCALE MRNA] OF 2-115 (ISOFORM 3)</scope>
    <source>
        <tissue>Bone marrow</tissue>
        <tissue>Lung</tissue>
        <tissue>Placenta</tissue>
    </source>
</reference>
<comment type="interaction">
    <interactant intactId="EBI-19946114">
        <id>Q5XKR9-2</id>
    </interactant>
    <interactant intactId="EBI-21535880">
        <id>Q92870-2</id>
        <label>APBB2</label>
    </interactant>
    <organismsDiffer>false</organismsDiffer>
    <experiments>3</experiments>
</comment>
<comment type="alternative products">
    <event type="alternative splicing"/>
    <isoform>
        <id>Q5XKR9-1</id>
        <name>1</name>
        <sequence type="displayed"/>
    </isoform>
    <isoform>
        <id>Q5XKR9-2</id>
        <name>2</name>
        <sequence type="described" ref="VSP_019078"/>
    </isoform>
    <isoform>
        <id>Q5XKR9-3</id>
        <name>3</name>
        <sequence type="described" ref="VSP_019078 VSP_019079"/>
    </isoform>
    <isoform>
        <id>Q5XKR9-4</id>
        <name>4</name>
        <sequence type="described" ref="VSP_044976 VSP_019079"/>
    </isoform>
    <isoform>
        <id>Q5XKR9-5</id>
        <name>5</name>
        <sequence type="described" ref="VSP_046645"/>
    </isoform>
    <isoform>
        <id>Q5XKR9-6</id>
        <name>6</name>
        <sequence type="described" ref="VSP_046644 VSP_019079"/>
    </isoform>
</comment>
<comment type="similarity">
    <text evidence="4">Belongs to the VCF family.</text>
</comment>
<sequence length="115" mass="13109">MGGCPVRKRRRNGSKEGNHHSTQPKRNKRNPIFQDSQDTEFSWSDNERSSSRINIPERASGPEGNLNQIVTEPDANFPQFLHEGLSKPVYVINWFMSFGPEIKLNTSQQGRNQAV</sequence>
<protein>
    <recommendedName>
        <fullName evidence="4">Protein VCF2</fullName>
    </recommendedName>
    <alternativeName>
        <fullName evidence="5">VCP nuclear cofactor family member 2</fullName>
    </alternativeName>
</protein>
<dbReference type="EMBL" id="AK299935">
    <property type="protein sequence ID" value="BAG61768.1"/>
    <property type="molecule type" value="mRNA"/>
</dbReference>
<dbReference type="EMBL" id="AL590240">
    <property type="status" value="NOT_ANNOTATED_CDS"/>
    <property type="molecule type" value="Genomic_DNA"/>
</dbReference>
<dbReference type="EMBL" id="CH471154">
    <property type="protein sequence ID" value="EAW93218.1"/>
    <property type="molecule type" value="Genomic_DNA"/>
</dbReference>
<dbReference type="EMBL" id="BC000919">
    <property type="protein sequence ID" value="AAH00919.2"/>
    <property type="molecule type" value="mRNA"/>
</dbReference>
<dbReference type="EMBL" id="BC006406">
    <property type="protein sequence ID" value="AAH06406.2"/>
    <property type="molecule type" value="mRNA"/>
</dbReference>
<dbReference type="EMBL" id="BC017571">
    <property type="protein sequence ID" value="AAH17571.1"/>
    <property type="molecule type" value="mRNA"/>
</dbReference>
<dbReference type="CCDS" id="CCDS35305.2">
    <molecule id="Q5XKR9-1"/>
</dbReference>
<dbReference type="CCDS" id="CCDS55422.1">
    <molecule id="Q5XKR9-6"/>
</dbReference>
<dbReference type="CCDS" id="CCDS55423.1">
    <molecule id="Q5XKR9-4"/>
</dbReference>
<dbReference type="CCDS" id="CCDS55424.1">
    <molecule id="Q5XKR9-5"/>
</dbReference>
<dbReference type="CCDS" id="CCDS55425.1">
    <molecule id="Q5XKR9-3"/>
</dbReference>
<dbReference type="CCDS" id="CCDS55426.1">
    <molecule id="Q5XKR9-2"/>
</dbReference>
<dbReference type="RefSeq" id="NP_001160171.1">
    <molecule id="Q5XKR9-2"/>
    <property type="nucleotide sequence ID" value="NM_001166699.2"/>
</dbReference>
<dbReference type="RefSeq" id="NP_001160172.1">
    <molecule id="Q5XKR9-3"/>
    <property type="nucleotide sequence ID" value="NM_001166700.2"/>
</dbReference>
<dbReference type="RefSeq" id="NP_001160174.1">
    <molecule id="Q5XKR9-4"/>
    <property type="nucleotide sequence ID" value="NM_001166702.2"/>
</dbReference>
<dbReference type="RefSeq" id="NP_001160175.1">
    <molecule id="Q5XKR9-6"/>
    <property type="nucleotide sequence ID" value="NM_001166703.2"/>
</dbReference>
<dbReference type="RefSeq" id="NP_001160176.1">
    <molecule id="Q5XKR9-5"/>
    <property type="nucleotide sequence ID" value="NM_001166704.2"/>
</dbReference>
<dbReference type="RefSeq" id="NP_612371.2">
    <molecule id="Q5XKR9-1"/>
    <property type="nucleotide sequence ID" value="NM_138362.4"/>
</dbReference>
<dbReference type="BioGRID" id="124757">
    <property type="interactions" value="2"/>
</dbReference>
<dbReference type="FunCoup" id="Q5XKR9">
    <property type="interactions" value="3"/>
</dbReference>
<dbReference type="IntAct" id="Q5XKR9">
    <property type="interactions" value="1"/>
</dbReference>
<dbReference type="STRING" id="9606.ENSP00000397188"/>
<dbReference type="BioMuta" id="FAM104B"/>
<dbReference type="MassIVE" id="Q5XKR9"/>
<dbReference type="PaxDb" id="9606-ENSP00000397188"/>
<dbReference type="PeptideAtlas" id="Q5XKR9"/>
<dbReference type="ProteomicsDB" id="13103"/>
<dbReference type="ProteomicsDB" id="20452"/>
<dbReference type="ProteomicsDB" id="65834">
    <molecule id="Q5XKR9-1"/>
</dbReference>
<dbReference type="ProteomicsDB" id="65835">
    <molecule id="Q5XKR9-2"/>
</dbReference>
<dbReference type="ProteomicsDB" id="65836">
    <molecule id="Q5XKR9-3"/>
</dbReference>
<dbReference type="Antibodypedia" id="55355">
    <property type="antibodies" value="67 antibodies from 9 providers"/>
</dbReference>
<dbReference type="DNASU" id="90736"/>
<dbReference type="Ensembl" id="ENST00000332132.8">
    <molecule id="Q5XKR9-2"/>
    <property type="protein sequence ID" value="ENSP00000333394.4"/>
    <property type="gene ID" value="ENSG00000182518.14"/>
</dbReference>
<dbReference type="Ensembl" id="ENST00000358460.8">
    <molecule id="Q5XKR9-1"/>
    <property type="protein sequence ID" value="ENSP00000364101.3"/>
    <property type="gene ID" value="ENSG00000182518.14"/>
</dbReference>
<dbReference type="Ensembl" id="ENST00000425133.2">
    <molecule id="Q5XKR9-3"/>
    <property type="protein sequence ID" value="ENSP00000397188.2"/>
    <property type="gene ID" value="ENSG00000182518.14"/>
</dbReference>
<dbReference type="Ensembl" id="ENST00000472571.2">
    <molecule id="Q5XKR9-5"/>
    <property type="protein sequence ID" value="ENSP00000420895.1"/>
    <property type="gene ID" value="ENSG00000182518.14"/>
</dbReference>
<dbReference type="Ensembl" id="ENST00000477847.6">
    <molecule id="Q5XKR9-4"/>
    <property type="protein sequence ID" value="ENSP00000421161.1"/>
    <property type="gene ID" value="ENSG00000182518.14"/>
</dbReference>
<dbReference type="Ensembl" id="ENST00000489298.1">
    <molecule id="Q5XKR9-6"/>
    <property type="protein sequence ID" value="ENSP00000423164.1"/>
    <property type="gene ID" value="ENSG00000182518.14"/>
</dbReference>
<dbReference type="GeneID" id="90736"/>
<dbReference type="KEGG" id="hsa:90736"/>
<dbReference type="UCSC" id="uc004dug.2">
    <molecule id="Q5XKR9-1"/>
    <property type="organism name" value="human"/>
</dbReference>
<dbReference type="AGR" id="HGNC:25085"/>
<dbReference type="CTD" id="90736"/>
<dbReference type="GeneCards" id="VCF2"/>
<dbReference type="HGNC" id="HGNC:25085">
    <property type="gene designation" value="VCF2"/>
</dbReference>
<dbReference type="HPA" id="ENSG00000182518">
    <property type="expression patterns" value="Low tissue specificity"/>
</dbReference>
<dbReference type="MIM" id="301141">
    <property type="type" value="gene"/>
</dbReference>
<dbReference type="neXtProt" id="NX_Q5XKR9"/>
<dbReference type="OpenTargets" id="ENSG00000182518"/>
<dbReference type="PharmGKB" id="PA134945008"/>
<dbReference type="VEuPathDB" id="HostDB:ENSG00000182518"/>
<dbReference type="GeneTree" id="ENSGT00390000001055"/>
<dbReference type="HOGENOM" id="CLU_3191120_0_0_1"/>
<dbReference type="InParanoid" id="Q5XKR9"/>
<dbReference type="OMA" id="EYSHEEY"/>
<dbReference type="OrthoDB" id="9939148at2759"/>
<dbReference type="PAN-GO" id="Q5XKR9">
    <property type="GO annotations" value="0 GO annotations based on evolutionary models"/>
</dbReference>
<dbReference type="PhylomeDB" id="Q5XKR9"/>
<dbReference type="PathwayCommons" id="Q5XKR9"/>
<dbReference type="SignaLink" id="Q5XKR9"/>
<dbReference type="BioGRID-ORCS" id="90736">
    <property type="hits" value="77 hits in 782 CRISPR screens"/>
</dbReference>
<dbReference type="ChiTaRS" id="FAM104B">
    <property type="organism name" value="human"/>
</dbReference>
<dbReference type="GenomeRNAi" id="90736"/>
<dbReference type="Pharos" id="Q5XKR9">
    <property type="development level" value="Tdark"/>
</dbReference>
<dbReference type="PRO" id="PR:Q5XKR9"/>
<dbReference type="Proteomes" id="UP000005640">
    <property type="component" value="Chromosome X"/>
</dbReference>
<dbReference type="RNAct" id="Q5XKR9">
    <property type="molecule type" value="protein"/>
</dbReference>
<dbReference type="Bgee" id="ENSG00000182518">
    <property type="expression patterns" value="Expressed in right uterine tube and 154 other cell types or tissues"/>
</dbReference>
<dbReference type="InterPro" id="IPR029222">
    <property type="entry name" value="VCF1/2-like"/>
</dbReference>
<dbReference type="PANTHER" id="PTHR34763">
    <property type="entry name" value="PROTEIN FAM104A"/>
    <property type="match status" value="1"/>
</dbReference>
<dbReference type="PANTHER" id="PTHR34763:SF2">
    <property type="entry name" value="PROTEIN FAM104B"/>
    <property type="match status" value="1"/>
</dbReference>
<dbReference type="Pfam" id="PF15434">
    <property type="entry name" value="FAM104"/>
    <property type="match status" value="1"/>
</dbReference>
<proteinExistence type="evidence at protein level"/>
<feature type="chain" id="PRO_0000239034" description="Protein VCF2">
    <location>
        <begin position="1"/>
        <end position="115"/>
    </location>
</feature>
<feature type="region of interest" description="Disordered" evidence="1">
    <location>
        <begin position="1"/>
        <end position="70"/>
    </location>
</feature>
<feature type="compositionally biased region" description="Basic residues" evidence="1">
    <location>
        <begin position="1"/>
        <end position="12"/>
    </location>
</feature>
<feature type="compositionally biased region" description="Polar residues" evidence="1">
    <location>
        <begin position="33"/>
        <end position="44"/>
    </location>
</feature>
<feature type="splice variant" id="VSP_046644" description="In isoform 6." evidence="4">
    <original>MGGCPVR</original>
    <variation>MLVLWL</variation>
    <location>
        <begin position="1"/>
        <end position="7"/>
    </location>
</feature>
<feature type="splice variant" id="VSP_044976" description="In isoform 4." evidence="2">
    <original>MGGCPV</original>
    <variation>MTC</variation>
    <location>
        <begin position="1"/>
        <end position="6"/>
    </location>
</feature>
<feature type="splice variant" id="VSP_019078" description="In isoform 2 and isoform 3." evidence="3">
    <original>E</original>
    <variation>EV</variation>
    <location>
        <position position="40"/>
    </location>
</feature>
<feature type="splice variant" id="VSP_046645" description="In isoform 5." evidence="4">
    <original>FSWSDNERSSSRINIPERASGPEGNLNQIVTEPDANFPQFLHEGLSKPVYVINWFMSFGPEIKLNTSQQGRNQAV</original>
    <variation>VAIFME</variation>
    <location>
        <begin position="41"/>
        <end position="115"/>
    </location>
</feature>
<feature type="splice variant" id="VSP_019079" description="In isoform 3, isoform 4 and isoform 6." evidence="2 3">
    <original>LSKPVYVINWFMSFGPEIKLNTSQQGRNQAV</original>
    <variation>YVPCQGLYSHINQTLKEAHFNSLQQRGQAPT</variation>
    <location>
        <begin position="85"/>
        <end position="115"/>
    </location>
</feature>
<feature type="sequence variant" id="VAR_055796" description="In dbSNP:rs1047037.">
    <original>S</original>
    <variation>G</variation>
    <location>
        <position position="60"/>
    </location>
</feature>
<feature type="sequence conflict" description="In Ref. 1; BAG61768." evidence="4" ref="1">
    <original>D</original>
    <variation>V</variation>
    <location>
        <position position="74"/>
    </location>
</feature>
<accession>Q5XKR9</accession>
<accession>A6NEH1</accession>
<accession>B4DSV6</accession>
<accession>D6R9S5</accession>
<accession>D6RDJ5</accession>
<accession>E9PH40</accession>
<accession>Q8WVU5</accession>
<accession>Q9BRA1</accession>
<gene>
    <name evidence="5" type="primary">VCF2</name>
    <name type="synonym">CXorf44</name>
    <name type="synonym">FAM104B</name>
</gene>
<name>VCF2_HUMAN</name>
<keyword id="KW-0025">Alternative splicing</keyword>
<keyword id="KW-1185">Reference proteome</keyword>
<evidence type="ECO:0000256" key="1">
    <source>
        <dbReference type="SAM" id="MobiDB-lite"/>
    </source>
</evidence>
<evidence type="ECO:0000303" key="2">
    <source>
    </source>
</evidence>
<evidence type="ECO:0000303" key="3">
    <source>
    </source>
</evidence>
<evidence type="ECO:0000305" key="4"/>
<evidence type="ECO:0000312" key="5">
    <source>
        <dbReference type="HGNC" id="HGNC:25085"/>
    </source>
</evidence>
<organism>
    <name type="scientific">Homo sapiens</name>
    <name type="common">Human</name>
    <dbReference type="NCBI Taxonomy" id="9606"/>
    <lineage>
        <taxon>Eukaryota</taxon>
        <taxon>Metazoa</taxon>
        <taxon>Chordata</taxon>
        <taxon>Craniata</taxon>
        <taxon>Vertebrata</taxon>
        <taxon>Euteleostomi</taxon>
        <taxon>Mammalia</taxon>
        <taxon>Eutheria</taxon>
        <taxon>Euarchontoglires</taxon>
        <taxon>Primates</taxon>
        <taxon>Haplorrhini</taxon>
        <taxon>Catarrhini</taxon>
        <taxon>Hominidae</taxon>
        <taxon>Homo</taxon>
    </lineage>
</organism>